<reference key="1">
    <citation type="journal article" date="2005" name="J. Bacteriol.">
        <title>Insights on evolution of virulence and resistance from the complete genome analysis of an early methicillin-resistant Staphylococcus aureus strain and a biofilm-producing methicillin-resistant Staphylococcus epidermidis strain.</title>
        <authorList>
            <person name="Gill S.R."/>
            <person name="Fouts D.E."/>
            <person name="Archer G.L."/>
            <person name="Mongodin E.F."/>
            <person name="DeBoy R.T."/>
            <person name="Ravel J."/>
            <person name="Paulsen I.T."/>
            <person name="Kolonay J.F."/>
            <person name="Brinkac L.M."/>
            <person name="Beanan M.J."/>
            <person name="Dodson R.J."/>
            <person name="Daugherty S.C."/>
            <person name="Madupu R."/>
            <person name="Angiuoli S.V."/>
            <person name="Durkin A.S."/>
            <person name="Haft D.H."/>
            <person name="Vamathevan J.J."/>
            <person name="Khouri H."/>
            <person name="Utterback T.R."/>
            <person name="Lee C."/>
            <person name="Dimitrov G."/>
            <person name="Jiang L."/>
            <person name="Qin H."/>
            <person name="Weidman J."/>
            <person name="Tran K."/>
            <person name="Kang K.H."/>
            <person name="Hance I.R."/>
            <person name="Nelson K.E."/>
            <person name="Fraser C.M."/>
        </authorList>
    </citation>
    <scope>NUCLEOTIDE SEQUENCE [LARGE SCALE GENOMIC DNA]</scope>
    <source>
        <strain>ATCC 35984 / DSM 28319 / BCRC 17069 / CCUG 31568 / BM 3577 / RP62A</strain>
    </source>
</reference>
<keyword id="KW-0560">Oxidoreductase</keyword>
<keyword id="KW-1185">Reference proteome</keyword>
<organism>
    <name type="scientific">Staphylococcus epidermidis (strain ATCC 35984 / DSM 28319 / BCRC 17069 / CCUG 31568 / BM 3577 / RP62A)</name>
    <dbReference type="NCBI Taxonomy" id="176279"/>
    <lineage>
        <taxon>Bacteria</taxon>
        <taxon>Bacillati</taxon>
        <taxon>Bacillota</taxon>
        <taxon>Bacilli</taxon>
        <taxon>Bacillales</taxon>
        <taxon>Staphylococcaceae</taxon>
        <taxon>Staphylococcus</taxon>
    </lineage>
</organism>
<gene>
    <name evidence="1" type="primary">msrB</name>
    <name type="ordered locus">SERP0999</name>
</gene>
<feature type="chain" id="PRO_0000140302" description="Peptide methionine sulfoxide reductase MsrB">
    <location>
        <begin position="1"/>
        <end position="142"/>
    </location>
</feature>
<feature type="domain" description="MsrB" evidence="2">
    <location>
        <begin position="2"/>
        <end position="125"/>
    </location>
</feature>
<feature type="active site" description="Nucleophile" evidence="2">
    <location>
        <position position="114"/>
    </location>
</feature>
<sequence>MIKKNKEELNDMEYLVTQENGTEPPFQNEYWNHFEKGIYVDKLSGKPLFTSEDKFESNCGWPSFSKALNDDEIVELVDKSFGMIRTEVRSEKANSHLGHVFNDGPKEKGGLRYCINSAAIQFIPYDKLEELGYGDLIKHFKK</sequence>
<comment type="catalytic activity">
    <reaction evidence="1">
        <text>L-methionyl-[protein] + [thioredoxin]-disulfide + H2O = L-methionyl-(R)-S-oxide-[protein] + [thioredoxin]-dithiol</text>
        <dbReference type="Rhea" id="RHEA:24164"/>
        <dbReference type="Rhea" id="RHEA-COMP:10698"/>
        <dbReference type="Rhea" id="RHEA-COMP:10700"/>
        <dbReference type="Rhea" id="RHEA-COMP:12313"/>
        <dbReference type="Rhea" id="RHEA-COMP:12314"/>
        <dbReference type="ChEBI" id="CHEBI:15377"/>
        <dbReference type="ChEBI" id="CHEBI:16044"/>
        <dbReference type="ChEBI" id="CHEBI:29950"/>
        <dbReference type="ChEBI" id="CHEBI:45764"/>
        <dbReference type="ChEBI" id="CHEBI:50058"/>
        <dbReference type="EC" id="1.8.4.12"/>
    </reaction>
</comment>
<comment type="similarity">
    <text evidence="1">Belongs to the MsrB Met sulfoxide reductase family.</text>
</comment>
<protein>
    <recommendedName>
        <fullName evidence="1">Peptide methionine sulfoxide reductase MsrB</fullName>
        <ecNumber evidence="1">1.8.4.12</ecNumber>
    </recommendedName>
    <alternativeName>
        <fullName evidence="1">Peptide-methionine (R)-S-oxide reductase</fullName>
    </alternativeName>
</protein>
<name>MSRB_STAEQ</name>
<accession>Q5HPB4</accession>
<evidence type="ECO:0000255" key="1">
    <source>
        <dbReference type="HAMAP-Rule" id="MF_01400"/>
    </source>
</evidence>
<evidence type="ECO:0000255" key="2">
    <source>
        <dbReference type="PROSITE-ProRule" id="PRU01126"/>
    </source>
</evidence>
<dbReference type="EC" id="1.8.4.12" evidence="1"/>
<dbReference type="EMBL" id="CP000029">
    <property type="protein sequence ID" value="AAW54361.1"/>
    <property type="molecule type" value="Genomic_DNA"/>
</dbReference>
<dbReference type="RefSeq" id="WP_002439748.1">
    <property type="nucleotide sequence ID" value="NC_002976.3"/>
</dbReference>
<dbReference type="SMR" id="Q5HPB4"/>
<dbReference type="STRING" id="176279.SERP0999"/>
<dbReference type="GeneID" id="50018761"/>
<dbReference type="KEGG" id="ser:SERP0999"/>
<dbReference type="eggNOG" id="COG0229">
    <property type="taxonomic scope" value="Bacteria"/>
</dbReference>
<dbReference type="HOGENOM" id="CLU_031040_8_5_9"/>
<dbReference type="Proteomes" id="UP000000531">
    <property type="component" value="Chromosome"/>
</dbReference>
<dbReference type="GO" id="GO:0005737">
    <property type="term" value="C:cytoplasm"/>
    <property type="evidence" value="ECO:0007669"/>
    <property type="project" value="TreeGrafter"/>
</dbReference>
<dbReference type="GO" id="GO:0033743">
    <property type="term" value="F:peptide-methionine (R)-S-oxide reductase activity"/>
    <property type="evidence" value="ECO:0007669"/>
    <property type="project" value="UniProtKB-UniRule"/>
</dbReference>
<dbReference type="GO" id="GO:0030091">
    <property type="term" value="P:protein repair"/>
    <property type="evidence" value="ECO:0007669"/>
    <property type="project" value="InterPro"/>
</dbReference>
<dbReference type="GO" id="GO:0006979">
    <property type="term" value="P:response to oxidative stress"/>
    <property type="evidence" value="ECO:0007669"/>
    <property type="project" value="InterPro"/>
</dbReference>
<dbReference type="FunFam" id="2.170.150.20:FF:000003">
    <property type="entry name" value="Peptide methionine sulfoxide reductase MsrB"/>
    <property type="match status" value="1"/>
</dbReference>
<dbReference type="Gene3D" id="2.170.150.20">
    <property type="entry name" value="Peptide methionine sulfoxide reductase"/>
    <property type="match status" value="1"/>
</dbReference>
<dbReference type="HAMAP" id="MF_01400">
    <property type="entry name" value="MsrB"/>
    <property type="match status" value="1"/>
</dbReference>
<dbReference type="InterPro" id="IPR028427">
    <property type="entry name" value="Met_Sox_Rdtase_MsrB"/>
</dbReference>
<dbReference type="InterPro" id="IPR002579">
    <property type="entry name" value="Met_Sox_Rdtase_MsrB_dom"/>
</dbReference>
<dbReference type="InterPro" id="IPR011057">
    <property type="entry name" value="Mss4-like_sf"/>
</dbReference>
<dbReference type="NCBIfam" id="TIGR00357">
    <property type="entry name" value="peptide-methionine (R)-S-oxide reductase MsrB"/>
    <property type="match status" value="1"/>
</dbReference>
<dbReference type="PANTHER" id="PTHR10173">
    <property type="entry name" value="METHIONINE SULFOXIDE REDUCTASE"/>
    <property type="match status" value="1"/>
</dbReference>
<dbReference type="PANTHER" id="PTHR10173:SF59">
    <property type="entry name" value="PEPTIDE METHIONINE SULFOXIDE REDUCTASE MSRA_MSRB"/>
    <property type="match status" value="1"/>
</dbReference>
<dbReference type="Pfam" id="PF01641">
    <property type="entry name" value="SelR"/>
    <property type="match status" value="1"/>
</dbReference>
<dbReference type="SUPFAM" id="SSF51316">
    <property type="entry name" value="Mss4-like"/>
    <property type="match status" value="1"/>
</dbReference>
<dbReference type="PROSITE" id="PS51790">
    <property type="entry name" value="MSRB"/>
    <property type="match status" value="1"/>
</dbReference>
<proteinExistence type="inferred from homology"/>